<organismHost>
    <name type="scientific">Aedes vexans</name>
    <name type="common">Inland floodwater mosquito</name>
    <name type="synonym">Culex vexans</name>
    <dbReference type="NCBI Taxonomy" id="7163"/>
</organismHost>
<organismHost>
    <name type="scientific">Culex territans</name>
    <dbReference type="NCBI Taxonomy" id="42431"/>
</organismHost>
<organismHost>
    <name type="scientific">Culiseta annulata</name>
    <dbReference type="NCBI Taxonomy" id="332058"/>
</organismHost>
<organismHost>
    <name type="scientific">Ochlerotatus sollicitans</name>
    <name type="common">eastern saltmarsh mosquito</name>
    <dbReference type="NCBI Taxonomy" id="310513"/>
</organismHost>
<organismHost>
    <name type="scientific">Ochlerotatus taeniorhynchus</name>
    <name type="common">Black salt marsh mosquito</name>
    <name type="synonym">Aedes taeniorhynchus</name>
    <dbReference type="NCBI Taxonomy" id="329105"/>
</organismHost>
<organismHost>
    <name type="scientific">Psorophora ferox</name>
    <dbReference type="NCBI Taxonomy" id="7183"/>
</organismHost>
<accession>Q196V8</accession>
<reference key="1">
    <citation type="journal article" date="2006" name="J. Virol.">
        <title>Genome of invertebrate iridescent virus type 3 (mosquito iridescent virus).</title>
        <authorList>
            <person name="Delhon G."/>
            <person name="Tulman E.R."/>
            <person name="Afonso C.L."/>
            <person name="Lu Z."/>
            <person name="Becnel J.J."/>
            <person name="Moser B.A."/>
            <person name="Kutish G.F."/>
            <person name="Rock D.L."/>
        </authorList>
    </citation>
    <scope>NUCLEOTIDE SEQUENCE [LARGE SCALE GENOMIC DNA]</scope>
</reference>
<organism>
    <name type="scientific">Invertebrate iridescent virus 3</name>
    <name type="common">IIV-3</name>
    <name type="synonym">Mosquito iridescent virus</name>
    <dbReference type="NCBI Taxonomy" id="345201"/>
    <lineage>
        <taxon>Viruses</taxon>
        <taxon>Varidnaviria</taxon>
        <taxon>Bamfordvirae</taxon>
        <taxon>Nucleocytoviricota</taxon>
        <taxon>Megaviricetes</taxon>
        <taxon>Pimascovirales</taxon>
        <taxon>Iridoviridae</taxon>
        <taxon>Betairidovirinae</taxon>
        <taxon>Chloriridovirus</taxon>
    </lineage>
</organism>
<protein>
    <recommendedName>
        <fullName>Uncharacterized protein 102R</fullName>
    </recommendedName>
</protein>
<evidence type="ECO:0000255" key="1"/>
<name>102R_IIV3</name>
<feature type="chain" id="PRO_0000377810" description="Uncharacterized protein 102R">
    <location>
        <begin position="1"/>
        <end position="121"/>
    </location>
</feature>
<feature type="coiled-coil region" evidence="1">
    <location>
        <begin position="8"/>
        <end position="37"/>
    </location>
</feature>
<sequence>MTLEDECKQLMVCRDEIKKLKLKEKEAKNRILTYLKNHNQYGVIFKHNKKQISITVETTPVKKNPSLKEKQTKIQDILSGVGVANPDATTQEIIDGLKTTTITDTSNQKDVLKLKMGKRAG</sequence>
<gene>
    <name type="ORF">IIV3-102R</name>
</gene>
<dbReference type="EMBL" id="DQ643392">
    <property type="protein sequence ID" value="ABF82132.1"/>
    <property type="molecule type" value="Genomic_DNA"/>
</dbReference>
<dbReference type="RefSeq" id="YP_654674.1">
    <property type="nucleotide sequence ID" value="NC_008187.1"/>
</dbReference>
<dbReference type="SMR" id="Q196V8"/>
<dbReference type="KEGG" id="vg:4156246"/>
<dbReference type="OrthoDB" id="25118at10239"/>
<dbReference type="Proteomes" id="UP000001358">
    <property type="component" value="Genome"/>
</dbReference>
<proteinExistence type="predicted"/>
<keyword id="KW-0175">Coiled coil</keyword>
<keyword id="KW-1185">Reference proteome</keyword>